<sequence length="202" mass="22009">MATQPRIGSISRVTSESDIRVEINLDGTGTVEIDTGVPFFDHMLTAFGVHGAFDLKVKATGDTHIDAHHTVEDTAIVLGQAIAQAVGDKRGIKRFGSFQLPMDETLCEAIVDFSGRPYFVTKGEPDYLVHSVIGSHYPTVLNEHFFESLALNAKITLHVLCRYGRDPHHITEAEFKAVARAIREAVGPDDRLTGIPSTKGAL</sequence>
<dbReference type="EC" id="4.2.1.19" evidence="1"/>
<dbReference type="EMBL" id="BX248358">
    <property type="protein sequence ID" value="CAE50089.1"/>
    <property type="molecule type" value="Genomic_DNA"/>
</dbReference>
<dbReference type="RefSeq" id="WP_010935157.1">
    <property type="nucleotide sequence ID" value="NC_002935.2"/>
</dbReference>
<dbReference type="SMR" id="P60884"/>
<dbReference type="STRING" id="257309.DIP1564"/>
<dbReference type="KEGG" id="cdi:DIP1564"/>
<dbReference type="HOGENOM" id="CLU_044308_2_0_11"/>
<dbReference type="UniPathway" id="UPA00031">
    <property type="reaction ID" value="UER00011"/>
</dbReference>
<dbReference type="Proteomes" id="UP000002198">
    <property type="component" value="Chromosome"/>
</dbReference>
<dbReference type="GO" id="GO:0005737">
    <property type="term" value="C:cytoplasm"/>
    <property type="evidence" value="ECO:0007669"/>
    <property type="project" value="UniProtKB-SubCell"/>
</dbReference>
<dbReference type="GO" id="GO:0004424">
    <property type="term" value="F:imidazoleglycerol-phosphate dehydratase activity"/>
    <property type="evidence" value="ECO:0007669"/>
    <property type="project" value="UniProtKB-UniRule"/>
</dbReference>
<dbReference type="GO" id="GO:0000105">
    <property type="term" value="P:L-histidine biosynthetic process"/>
    <property type="evidence" value="ECO:0007669"/>
    <property type="project" value="UniProtKB-UniRule"/>
</dbReference>
<dbReference type="CDD" id="cd07914">
    <property type="entry name" value="IGPD"/>
    <property type="match status" value="1"/>
</dbReference>
<dbReference type="FunFam" id="3.30.230.40:FF:000001">
    <property type="entry name" value="Imidazoleglycerol-phosphate dehydratase HisB"/>
    <property type="match status" value="1"/>
</dbReference>
<dbReference type="FunFam" id="3.30.230.40:FF:000003">
    <property type="entry name" value="Imidazoleglycerol-phosphate dehydratase HisB"/>
    <property type="match status" value="1"/>
</dbReference>
<dbReference type="Gene3D" id="3.30.230.40">
    <property type="entry name" value="Imidazole glycerol phosphate dehydratase, domain 1"/>
    <property type="match status" value="2"/>
</dbReference>
<dbReference type="HAMAP" id="MF_00076">
    <property type="entry name" value="HisB"/>
    <property type="match status" value="1"/>
</dbReference>
<dbReference type="InterPro" id="IPR038494">
    <property type="entry name" value="IGPD_sf"/>
</dbReference>
<dbReference type="InterPro" id="IPR000807">
    <property type="entry name" value="ImidazoleglycerolP_deHydtase"/>
</dbReference>
<dbReference type="InterPro" id="IPR020565">
    <property type="entry name" value="ImidazoleglycerP_deHydtase_CS"/>
</dbReference>
<dbReference type="InterPro" id="IPR020568">
    <property type="entry name" value="Ribosomal_Su5_D2-typ_SF"/>
</dbReference>
<dbReference type="NCBIfam" id="NF002110">
    <property type="entry name" value="PRK00951.1-6"/>
    <property type="match status" value="1"/>
</dbReference>
<dbReference type="NCBIfam" id="NF002111">
    <property type="entry name" value="PRK00951.2-1"/>
    <property type="match status" value="1"/>
</dbReference>
<dbReference type="NCBIfam" id="NF002114">
    <property type="entry name" value="PRK00951.2-4"/>
    <property type="match status" value="1"/>
</dbReference>
<dbReference type="PANTHER" id="PTHR23133:SF2">
    <property type="entry name" value="IMIDAZOLEGLYCEROL-PHOSPHATE DEHYDRATASE"/>
    <property type="match status" value="1"/>
</dbReference>
<dbReference type="PANTHER" id="PTHR23133">
    <property type="entry name" value="IMIDAZOLEGLYCEROL-PHOSPHATE DEHYDRATASE HIS7"/>
    <property type="match status" value="1"/>
</dbReference>
<dbReference type="Pfam" id="PF00475">
    <property type="entry name" value="IGPD"/>
    <property type="match status" value="1"/>
</dbReference>
<dbReference type="SUPFAM" id="SSF54211">
    <property type="entry name" value="Ribosomal protein S5 domain 2-like"/>
    <property type="match status" value="2"/>
</dbReference>
<dbReference type="PROSITE" id="PS00954">
    <property type="entry name" value="IGP_DEHYDRATASE_1"/>
    <property type="match status" value="1"/>
</dbReference>
<dbReference type="PROSITE" id="PS00955">
    <property type="entry name" value="IGP_DEHYDRATASE_2"/>
    <property type="match status" value="1"/>
</dbReference>
<reference key="1">
    <citation type="journal article" date="2003" name="Nucleic Acids Res.">
        <title>The complete genome sequence and analysis of Corynebacterium diphtheriae NCTC13129.</title>
        <authorList>
            <person name="Cerdeno-Tarraga A.-M."/>
            <person name="Efstratiou A."/>
            <person name="Dover L.G."/>
            <person name="Holden M.T.G."/>
            <person name="Pallen M.J."/>
            <person name="Bentley S.D."/>
            <person name="Besra G.S."/>
            <person name="Churcher C.M."/>
            <person name="James K.D."/>
            <person name="De Zoysa A."/>
            <person name="Chillingworth T."/>
            <person name="Cronin A."/>
            <person name="Dowd L."/>
            <person name="Feltwell T."/>
            <person name="Hamlin N."/>
            <person name="Holroyd S."/>
            <person name="Jagels K."/>
            <person name="Moule S."/>
            <person name="Quail M.A."/>
            <person name="Rabbinowitsch E."/>
            <person name="Rutherford K.M."/>
            <person name="Thomson N.R."/>
            <person name="Unwin L."/>
            <person name="Whitehead S."/>
            <person name="Barrell B.G."/>
            <person name="Parkhill J."/>
        </authorList>
    </citation>
    <scope>NUCLEOTIDE SEQUENCE [LARGE SCALE GENOMIC DNA]</scope>
    <source>
        <strain>ATCC 700971 / NCTC 13129 / Biotype gravis</strain>
    </source>
</reference>
<comment type="catalytic activity">
    <reaction evidence="1">
        <text>D-erythro-1-(imidazol-4-yl)glycerol 3-phosphate = 3-(imidazol-4-yl)-2-oxopropyl phosphate + H2O</text>
        <dbReference type="Rhea" id="RHEA:11040"/>
        <dbReference type="ChEBI" id="CHEBI:15377"/>
        <dbReference type="ChEBI" id="CHEBI:57766"/>
        <dbReference type="ChEBI" id="CHEBI:58278"/>
        <dbReference type="EC" id="4.2.1.19"/>
    </reaction>
</comment>
<comment type="pathway">
    <text evidence="1">Amino-acid biosynthesis; L-histidine biosynthesis; L-histidine from 5-phospho-alpha-D-ribose 1-diphosphate: step 6/9.</text>
</comment>
<comment type="subcellular location">
    <subcellularLocation>
        <location evidence="1">Cytoplasm</location>
    </subcellularLocation>
</comment>
<comment type="similarity">
    <text evidence="1">Belongs to the imidazoleglycerol-phosphate dehydratase family.</text>
</comment>
<evidence type="ECO:0000255" key="1">
    <source>
        <dbReference type="HAMAP-Rule" id="MF_00076"/>
    </source>
</evidence>
<proteinExistence type="inferred from homology"/>
<protein>
    <recommendedName>
        <fullName evidence="1">Imidazoleglycerol-phosphate dehydratase</fullName>
        <shortName evidence="1">IGPD</shortName>
        <ecNumber evidence="1">4.2.1.19</ecNumber>
    </recommendedName>
</protein>
<feature type="chain" id="PRO_0000158125" description="Imidazoleglycerol-phosphate dehydratase">
    <location>
        <begin position="1"/>
        <end position="202"/>
    </location>
</feature>
<name>HIS7_CORDI</name>
<keyword id="KW-0028">Amino-acid biosynthesis</keyword>
<keyword id="KW-0963">Cytoplasm</keyword>
<keyword id="KW-0368">Histidine biosynthesis</keyword>
<keyword id="KW-0456">Lyase</keyword>
<keyword id="KW-1185">Reference proteome</keyword>
<organism>
    <name type="scientific">Corynebacterium diphtheriae (strain ATCC 700971 / NCTC 13129 / Biotype gravis)</name>
    <dbReference type="NCBI Taxonomy" id="257309"/>
    <lineage>
        <taxon>Bacteria</taxon>
        <taxon>Bacillati</taxon>
        <taxon>Actinomycetota</taxon>
        <taxon>Actinomycetes</taxon>
        <taxon>Mycobacteriales</taxon>
        <taxon>Corynebacteriaceae</taxon>
        <taxon>Corynebacterium</taxon>
    </lineage>
</organism>
<accession>P60884</accession>
<gene>
    <name evidence="1" type="primary">hisB</name>
    <name type="ordered locus">DIP1564</name>
</gene>